<protein>
    <recommendedName>
        <fullName evidence="1">UPF0301 protein VS_2679</fullName>
    </recommendedName>
</protein>
<proteinExistence type="inferred from homology"/>
<sequence length="187" mass="20456">MNLTNHFLVAMPGMKDPYFQNSVIYLCEHNDEGAMGLMINAPIDVTVGSMLKQVEVDSEQPKPNQASLDKPVLNGGPVAEDRGFILHKPKGSYQSSINMTDQISVTTSKDILMVLGTEDEPMHYLVALGYAGWEPGQLEIELTENSWLTVEADPKVIFNTPISDRWKVAVQMLGINAAQLSADAGHA</sequence>
<evidence type="ECO:0000255" key="1">
    <source>
        <dbReference type="HAMAP-Rule" id="MF_00758"/>
    </source>
</evidence>
<gene>
    <name type="ordered locus">VS_2679</name>
</gene>
<comment type="similarity">
    <text evidence="1">Belongs to the UPF0301 (AlgH) family.</text>
</comment>
<accession>B7VKQ2</accession>
<feature type="chain" id="PRO_1000148396" description="UPF0301 protein VS_2679">
    <location>
        <begin position="1"/>
        <end position="187"/>
    </location>
</feature>
<organism>
    <name type="scientific">Vibrio atlanticus (strain LGP32)</name>
    <name type="common">Vibrio splendidus (strain Mel32)</name>
    <dbReference type="NCBI Taxonomy" id="575788"/>
    <lineage>
        <taxon>Bacteria</taxon>
        <taxon>Pseudomonadati</taxon>
        <taxon>Pseudomonadota</taxon>
        <taxon>Gammaproteobacteria</taxon>
        <taxon>Vibrionales</taxon>
        <taxon>Vibrionaceae</taxon>
        <taxon>Vibrio</taxon>
    </lineage>
</organism>
<dbReference type="EMBL" id="FM954972">
    <property type="protein sequence ID" value="CAV19934.1"/>
    <property type="molecule type" value="Genomic_DNA"/>
</dbReference>
<dbReference type="SMR" id="B7VKQ2"/>
<dbReference type="STRING" id="575788.VS_2679"/>
<dbReference type="KEGG" id="vsp:VS_2679"/>
<dbReference type="eggNOG" id="COG1678">
    <property type="taxonomic scope" value="Bacteria"/>
</dbReference>
<dbReference type="HOGENOM" id="CLU_057596_1_0_6"/>
<dbReference type="Proteomes" id="UP000009100">
    <property type="component" value="Chromosome 1"/>
</dbReference>
<dbReference type="GO" id="GO:0005829">
    <property type="term" value="C:cytosol"/>
    <property type="evidence" value="ECO:0007669"/>
    <property type="project" value="TreeGrafter"/>
</dbReference>
<dbReference type="Gene3D" id="3.40.1740.10">
    <property type="entry name" value="VC0467-like"/>
    <property type="match status" value="1"/>
</dbReference>
<dbReference type="Gene3D" id="3.30.70.1300">
    <property type="entry name" value="VC0467-like domains"/>
    <property type="match status" value="1"/>
</dbReference>
<dbReference type="HAMAP" id="MF_00758">
    <property type="entry name" value="UPF0301"/>
    <property type="match status" value="1"/>
</dbReference>
<dbReference type="InterPro" id="IPR003774">
    <property type="entry name" value="AlgH-like"/>
</dbReference>
<dbReference type="NCBIfam" id="NF001266">
    <property type="entry name" value="PRK00228.1-1"/>
    <property type="match status" value="1"/>
</dbReference>
<dbReference type="PANTHER" id="PTHR30327">
    <property type="entry name" value="UNCHARACTERIZED PROTEIN YQGE"/>
    <property type="match status" value="1"/>
</dbReference>
<dbReference type="PANTHER" id="PTHR30327:SF1">
    <property type="entry name" value="UPF0301 PROTEIN YQGE"/>
    <property type="match status" value="1"/>
</dbReference>
<dbReference type="Pfam" id="PF02622">
    <property type="entry name" value="DUF179"/>
    <property type="match status" value="1"/>
</dbReference>
<dbReference type="SUPFAM" id="SSF143456">
    <property type="entry name" value="VC0467-like"/>
    <property type="match status" value="1"/>
</dbReference>
<name>Y2679_VIBA3</name>
<reference key="1">
    <citation type="submission" date="2009-02" db="EMBL/GenBank/DDBJ databases">
        <title>Vibrio splendidus str. LGP32 complete genome.</title>
        <authorList>
            <person name="Mazel D."/>
            <person name="Le Roux F."/>
        </authorList>
    </citation>
    <scope>NUCLEOTIDE SEQUENCE [LARGE SCALE GENOMIC DNA]</scope>
    <source>
        <strain>LGP32</strain>
    </source>
</reference>